<sequence length="747" mass="82310">MDGGGSSSWTHVSKNLIERRAVKGCLLPTPSDVMDAAVMALKDVTENIVGQQLFSVDRTNALSVIHTNEVPESIIATAIARDTSRDYLREYEGAAKCNLAATDLSHDEMWEVVIKRYWRYLRESSGAEVVDRGAVGQATQSVLSVLLLQSTFGKKRLSKNPFKHKGPNVGYKSNLEDLRSAFTKIEKYMYYMRPNDPMTKSEDTELRLHELLAYVTTCYRWLLWFMDLTDAKVLRNIDKGPVITHGPRESRPPDELVRRHLKSGPAISAGTGVALTLSTATADALIVLLRMSVSWTSHSWKSNTHGVTGAIVAAVELVTLIHHHLQYIINTVFAGYVCWLDGGVENSYLNSALRSQGRFDHFVGKLVPIMATLSWANMEKGTVMWFKYALAKSIVCHGSPTQHYLTVLESIASKRTGACPPQGSTFGRNPSGFPGQFCCPPQGPLPAPPNSKTRGTFRRCRPGSLRSSRQLPTSPPSNIVSPRTNPAIEGSTAAKNVQGAETIQVRSSGEFNDCIWYINGAYPHQRSDSSSSDNSTCSSTETQYITLPSTPSPTGDVVYTNPLLGPDEEVDASPQPVDPMSDYSAPKNPDYMRPRSTLVEEVWQLRDSDYTPYMRPSRAGRSRVRVEDQTLEPSSPAGCNPPANSPENDSDDAAVDSPPISPEVVYGTFRPRAKCVYDQYGLTALAALSASRAKARRTRPGPTQPDVCRERDEESAEPRHDGFIRRTMSTTGPPRKHPDQTERVSSL</sequence>
<comment type="function">
    <text evidence="1">Modulates alpha trans-inducing factor-dependent activation of alpha genes.</text>
</comment>
<comment type="subcellular location">
    <subcellularLocation>
        <location evidence="2">Virion tegument</location>
    </subcellularLocation>
    <subcellularLocation>
        <location evidence="2">Host cell membrane</location>
        <topology evidence="2">Peripheral membrane protein</topology>
    </subcellularLocation>
</comment>
<comment type="similarity">
    <text evidence="4">Belongs to the herpesviridae HHV-1 VP11/12 protein family.</text>
</comment>
<gene>
    <name type="ORF">14</name>
</gene>
<organism>
    <name type="scientific">Equine herpesvirus 1 (strain Ab4p)</name>
    <name type="common">EHV-1</name>
    <name type="synonym">Equine abortion virus</name>
    <dbReference type="NCBI Taxonomy" id="31520"/>
    <lineage>
        <taxon>Viruses</taxon>
        <taxon>Duplodnaviria</taxon>
        <taxon>Heunggongvirae</taxon>
        <taxon>Peploviricota</taxon>
        <taxon>Herviviricetes</taxon>
        <taxon>Herpesvirales</taxon>
        <taxon>Orthoherpesviridae</taxon>
        <taxon>Alphaherpesvirinae</taxon>
        <taxon>Varicellovirus</taxon>
        <taxon>Varicellovirus equidalpha1</taxon>
        <taxon>Equid alphaherpesvirus 1</taxon>
    </lineage>
</organism>
<accession>P28937</accession>
<accession>Q6DLJ7</accession>
<dbReference type="EMBL" id="AY665713">
    <property type="protein sequence ID" value="AAT67271.1"/>
    <property type="molecule type" value="Genomic_DNA"/>
</dbReference>
<dbReference type="PIR" id="F36796">
    <property type="entry name" value="TNBEA2"/>
</dbReference>
<dbReference type="KEGG" id="vg:1487517"/>
<dbReference type="Proteomes" id="UP000001189">
    <property type="component" value="Segment"/>
</dbReference>
<dbReference type="GO" id="GO:0020002">
    <property type="term" value="C:host cell plasma membrane"/>
    <property type="evidence" value="ECO:0007669"/>
    <property type="project" value="UniProtKB-SubCell"/>
</dbReference>
<dbReference type="GO" id="GO:0016020">
    <property type="term" value="C:membrane"/>
    <property type="evidence" value="ECO:0007669"/>
    <property type="project" value="UniProtKB-KW"/>
</dbReference>
<dbReference type="GO" id="GO:0019033">
    <property type="term" value="C:viral tegument"/>
    <property type="evidence" value="ECO:0007669"/>
    <property type="project" value="UniProtKB-SubCell"/>
</dbReference>
<dbReference type="GO" id="GO:0006355">
    <property type="term" value="P:regulation of DNA-templated transcription"/>
    <property type="evidence" value="ECO:0007669"/>
    <property type="project" value="InterPro"/>
</dbReference>
<dbReference type="InterPro" id="IPR005051">
    <property type="entry name" value="Herpes_UL46"/>
</dbReference>
<dbReference type="Pfam" id="PF03387">
    <property type="entry name" value="Herpes_UL46"/>
    <property type="match status" value="1"/>
</dbReference>
<evidence type="ECO:0000250" key="1"/>
<evidence type="ECO:0000250" key="2">
    <source>
        <dbReference type="UniProtKB" id="P10230"/>
    </source>
</evidence>
<evidence type="ECO:0000256" key="3">
    <source>
        <dbReference type="SAM" id="MobiDB-lite"/>
    </source>
</evidence>
<evidence type="ECO:0000305" key="4"/>
<organismHost>
    <name type="scientific">Equus caballus</name>
    <name type="common">Horse</name>
    <dbReference type="NCBI Taxonomy" id="9796"/>
</organismHost>
<reference key="1">
    <citation type="journal article" date="1992" name="Virology">
        <title>The DNA sequence of equine herpesvirus-1.</title>
        <authorList>
            <person name="Telford E.A.R."/>
            <person name="Watson M.S."/>
            <person name="McBride K."/>
            <person name="Davison A.J."/>
        </authorList>
    </citation>
    <scope>NUCLEOTIDE SEQUENCE [LARGE SCALE GENOMIC DNA]</scope>
</reference>
<protein>
    <recommendedName>
        <fullName>Tegument protein UL46 homolog</fullName>
    </recommendedName>
    <alternativeName>
        <fullName>Tegument protein VP11/12 homolog</fullName>
    </alternativeName>
</protein>
<feature type="chain" id="PRO_0000115795" description="Tegument protein UL46 homolog">
    <location>
        <begin position="1"/>
        <end position="747"/>
    </location>
</feature>
<feature type="region of interest" description="Disordered" evidence="3">
    <location>
        <begin position="437"/>
        <end position="484"/>
    </location>
</feature>
<feature type="region of interest" description="Disordered" evidence="3">
    <location>
        <begin position="525"/>
        <end position="593"/>
    </location>
</feature>
<feature type="region of interest" description="Disordered" evidence="3">
    <location>
        <begin position="611"/>
        <end position="665"/>
    </location>
</feature>
<feature type="region of interest" description="Disordered" evidence="3">
    <location>
        <begin position="689"/>
        <end position="747"/>
    </location>
</feature>
<feature type="compositionally biased region" description="Polar residues" evidence="3">
    <location>
        <begin position="465"/>
        <end position="484"/>
    </location>
</feature>
<feature type="compositionally biased region" description="Low complexity" evidence="3">
    <location>
        <begin position="528"/>
        <end position="540"/>
    </location>
</feature>
<feature type="compositionally biased region" description="Polar residues" evidence="3">
    <location>
        <begin position="541"/>
        <end position="553"/>
    </location>
</feature>
<feature type="compositionally biased region" description="Basic and acidic residues" evidence="3">
    <location>
        <begin position="707"/>
        <end position="724"/>
    </location>
</feature>
<feature type="compositionally biased region" description="Basic and acidic residues" evidence="3">
    <location>
        <begin position="736"/>
        <end position="747"/>
    </location>
</feature>
<proteinExistence type="inferred from homology"/>
<keyword id="KW-0010">Activator</keyword>
<keyword id="KW-1032">Host cell membrane</keyword>
<keyword id="KW-1043">Host membrane</keyword>
<keyword id="KW-0472">Membrane</keyword>
<keyword id="KW-0597">Phosphoprotein</keyword>
<keyword id="KW-1185">Reference proteome</keyword>
<keyword id="KW-0804">Transcription</keyword>
<keyword id="KW-0805">Transcription regulation</keyword>
<keyword id="KW-0946">Virion</keyword>
<keyword id="KW-0920">Virion tegument</keyword>
<name>TEG1_EHV1B</name>